<accession>B7MFH3</accession>
<feature type="chain" id="PRO_1000134375" description="Protein-export protein SecB">
    <location>
        <begin position="1"/>
        <end position="155"/>
    </location>
</feature>
<organism>
    <name type="scientific">Escherichia coli O45:K1 (strain S88 / ExPEC)</name>
    <dbReference type="NCBI Taxonomy" id="585035"/>
    <lineage>
        <taxon>Bacteria</taxon>
        <taxon>Pseudomonadati</taxon>
        <taxon>Pseudomonadota</taxon>
        <taxon>Gammaproteobacteria</taxon>
        <taxon>Enterobacterales</taxon>
        <taxon>Enterobacteriaceae</taxon>
        <taxon>Escherichia</taxon>
    </lineage>
</organism>
<proteinExistence type="inferred from homology"/>
<protein>
    <recommendedName>
        <fullName evidence="1">Protein-export protein SecB</fullName>
    </recommendedName>
</protein>
<name>SECB_ECO45</name>
<evidence type="ECO:0000255" key="1">
    <source>
        <dbReference type="HAMAP-Rule" id="MF_00821"/>
    </source>
</evidence>
<keyword id="KW-0143">Chaperone</keyword>
<keyword id="KW-0963">Cytoplasm</keyword>
<keyword id="KW-0653">Protein transport</keyword>
<keyword id="KW-1185">Reference proteome</keyword>
<keyword id="KW-0811">Translocation</keyword>
<keyword id="KW-0813">Transport</keyword>
<reference key="1">
    <citation type="journal article" date="2009" name="PLoS Genet.">
        <title>Organised genome dynamics in the Escherichia coli species results in highly diverse adaptive paths.</title>
        <authorList>
            <person name="Touchon M."/>
            <person name="Hoede C."/>
            <person name="Tenaillon O."/>
            <person name="Barbe V."/>
            <person name="Baeriswyl S."/>
            <person name="Bidet P."/>
            <person name="Bingen E."/>
            <person name="Bonacorsi S."/>
            <person name="Bouchier C."/>
            <person name="Bouvet O."/>
            <person name="Calteau A."/>
            <person name="Chiapello H."/>
            <person name="Clermont O."/>
            <person name="Cruveiller S."/>
            <person name="Danchin A."/>
            <person name="Diard M."/>
            <person name="Dossat C."/>
            <person name="Karoui M.E."/>
            <person name="Frapy E."/>
            <person name="Garry L."/>
            <person name="Ghigo J.M."/>
            <person name="Gilles A.M."/>
            <person name="Johnson J."/>
            <person name="Le Bouguenec C."/>
            <person name="Lescat M."/>
            <person name="Mangenot S."/>
            <person name="Martinez-Jehanne V."/>
            <person name="Matic I."/>
            <person name="Nassif X."/>
            <person name="Oztas S."/>
            <person name="Petit M.A."/>
            <person name="Pichon C."/>
            <person name="Rouy Z."/>
            <person name="Ruf C.S."/>
            <person name="Schneider D."/>
            <person name="Tourret J."/>
            <person name="Vacherie B."/>
            <person name="Vallenet D."/>
            <person name="Medigue C."/>
            <person name="Rocha E.P.C."/>
            <person name="Denamur E."/>
        </authorList>
    </citation>
    <scope>NUCLEOTIDE SEQUENCE [LARGE SCALE GENOMIC DNA]</scope>
    <source>
        <strain>S88 / ExPEC</strain>
    </source>
</reference>
<comment type="function">
    <text evidence="1">One of the proteins required for the normal export of preproteins out of the cell cytoplasm. It is a molecular chaperone that binds to a subset of precursor proteins, maintaining them in a translocation-competent state. It also specifically binds to its receptor SecA.</text>
</comment>
<comment type="subunit">
    <text evidence="1">Homotetramer, a dimer of dimers. One homotetramer interacts with 1 SecA dimer.</text>
</comment>
<comment type="subcellular location">
    <subcellularLocation>
        <location evidence="1">Cytoplasm</location>
    </subcellularLocation>
</comment>
<comment type="similarity">
    <text evidence="1">Belongs to the SecB family.</text>
</comment>
<sequence>MSEQNNTEMTFQIQRIYTKDISFEAPNAPHVFQKDWQPEVKLDLDTASTQLADDVYEVVLRVTVTASLGEETAFLCEVQQGGIFSIAGIEGTQMAHCLGAYCPNILFPYARECITSMVSRGTFPQLNLAPVNFDALFMNYLQQQAGEGTEEHQDA</sequence>
<dbReference type="EMBL" id="CU928161">
    <property type="protein sequence ID" value="CAR05235.1"/>
    <property type="molecule type" value="Genomic_DNA"/>
</dbReference>
<dbReference type="RefSeq" id="WP_000003382.1">
    <property type="nucleotide sequence ID" value="NC_011742.1"/>
</dbReference>
<dbReference type="SMR" id="B7MFH3"/>
<dbReference type="GeneID" id="89518465"/>
<dbReference type="KEGG" id="ecz:ECS88_4026"/>
<dbReference type="HOGENOM" id="CLU_111574_1_0_6"/>
<dbReference type="Proteomes" id="UP000000747">
    <property type="component" value="Chromosome"/>
</dbReference>
<dbReference type="GO" id="GO:0005737">
    <property type="term" value="C:cytoplasm"/>
    <property type="evidence" value="ECO:0007669"/>
    <property type="project" value="UniProtKB-SubCell"/>
</dbReference>
<dbReference type="GO" id="GO:0051082">
    <property type="term" value="F:unfolded protein binding"/>
    <property type="evidence" value="ECO:0007669"/>
    <property type="project" value="InterPro"/>
</dbReference>
<dbReference type="GO" id="GO:0006457">
    <property type="term" value="P:protein folding"/>
    <property type="evidence" value="ECO:0007669"/>
    <property type="project" value="UniProtKB-UniRule"/>
</dbReference>
<dbReference type="GO" id="GO:0051262">
    <property type="term" value="P:protein tetramerization"/>
    <property type="evidence" value="ECO:0007669"/>
    <property type="project" value="InterPro"/>
</dbReference>
<dbReference type="GO" id="GO:0015031">
    <property type="term" value="P:protein transport"/>
    <property type="evidence" value="ECO:0007669"/>
    <property type="project" value="UniProtKB-UniRule"/>
</dbReference>
<dbReference type="CDD" id="cd00557">
    <property type="entry name" value="Translocase_SecB"/>
    <property type="match status" value="1"/>
</dbReference>
<dbReference type="FunFam" id="3.10.420.10:FF:000001">
    <property type="entry name" value="Protein-export chaperone SecB"/>
    <property type="match status" value="1"/>
</dbReference>
<dbReference type="Gene3D" id="3.10.420.10">
    <property type="entry name" value="SecB-like"/>
    <property type="match status" value="1"/>
</dbReference>
<dbReference type="HAMAP" id="MF_00821">
    <property type="entry name" value="SecB"/>
    <property type="match status" value="1"/>
</dbReference>
<dbReference type="InterPro" id="IPR003708">
    <property type="entry name" value="SecB"/>
</dbReference>
<dbReference type="InterPro" id="IPR035958">
    <property type="entry name" value="SecB-like_sf"/>
</dbReference>
<dbReference type="NCBIfam" id="NF004390">
    <property type="entry name" value="PRK05751.1-1"/>
    <property type="match status" value="1"/>
</dbReference>
<dbReference type="NCBIfam" id="NF004393">
    <property type="entry name" value="PRK05751.1-4"/>
    <property type="match status" value="1"/>
</dbReference>
<dbReference type="NCBIfam" id="TIGR00809">
    <property type="entry name" value="secB"/>
    <property type="match status" value="1"/>
</dbReference>
<dbReference type="PANTHER" id="PTHR36918">
    <property type="match status" value="1"/>
</dbReference>
<dbReference type="PANTHER" id="PTHR36918:SF1">
    <property type="entry name" value="PROTEIN-EXPORT PROTEIN SECB"/>
    <property type="match status" value="1"/>
</dbReference>
<dbReference type="Pfam" id="PF02556">
    <property type="entry name" value="SecB"/>
    <property type="match status" value="1"/>
</dbReference>
<dbReference type="PRINTS" id="PR01594">
    <property type="entry name" value="SECBCHAPRONE"/>
</dbReference>
<dbReference type="SUPFAM" id="SSF54611">
    <property type="entry name" value="SecB-like"/>
    <property type="match status" value="1"/>
</dbReference>
<gene>
    <name evidence="1" type="primary">secB</name>
    <name type="ordered locus">ECS88_4026</name>
</gene>